<comment type="function">
    <text evidence="1">Negatively regulates the expression of sulfate ester dioxygenase MT3514 and its own expression.</text>
</comment>
<comment type="induction">
    <text evidence="1">Negatively autoregulated.</text>
</comment>
<comment type="domain">
    <text evidence="1">Contains an N-terminal DNA-binding domain and a C-terminal ligand binding pocket.</text>
</comment>
<sequence length="188" mass="20609">MTTRPATDRRKMPTGREEVAAAILQAATDLFAERGPAATSIRDIAARSKVNHGLVFRHFGTKDQLVGAVLDHLGTKLTRLLHSEAPADIIERALDRHGRVLARALLDGYPVGQLQQRFPNVAELLDAVRPRYDSDLGARLAVAHALALQFGWRLFAPMLRSATGIDELTGDELRLSVNDAVARILEPH</sequence>
<organism>
    <name type="scientific">Mycobacterium tuberculosis (strain CDC 1551 / Oshkosh)</name>
    <dbReference type="NCBI Taxonomy" id="83331"/>
    <lineage>
        <taxon>Bacteria</taxon>
        <taxon>Bacillati</taxon>
        <taxon>Actinomycetota</taxon>
        <taxon>Actinomycetes</taxon>
        <taxon>Mycobacteriales</taxon>
        <taxon>Mycobacteriaceae</taxon>
        <taxon>Mycobacterium</taxon>
        <taxon>Mycobacterium tuberculosis complex</taxon>
    </lineage>
</organism>
<keyword id="KW-0238">DNA-binding</keyword>
<keyword id="KW-1185">Reference proteome</keyword>
<keyword id="KW-0678">Repressor</keyword>
<keyword id="KW-0804">Transcription</keyword>
<keyword id="KW-0805">Transcription regulation</keyword>
<name>HTHR_MYCTO</name>
<evidence type="ECO:0000250" key="1">
    <source>
        <dbReference type="UniProtKB" id="P9WMC3"/>
    </source>
</evidence>
<evidence type="ECO:0000255" key="2">
    <source>
        <dbReference type="PROSITE-ProRule" id="PRU00335"/>
    </source>
</evidence>
<evidence type="ECO:0000305" key="3"/>
<reference key="1">
    <citation type="journal article" date="2002" name="J. Bacteriol.">
        <title>Whole-genome comparison of Mycobacterium tuberculosis clinical and laboratory strains.</title>
        <authorList>
            <person name="Fleischmann R.D."/>
            <person name="Alland D."/>
            <person name="Eisen J.A."/>
            <person name="Carpenter L."/>
            <person name="White O."/>
            <person name="Peterson J.D."/>
            <person name="DeBoy R.T."/>
            <person name="Dodson R.J."/>
            <person name="Gwinn M.L."/>
            <person name="Haft D.H."/>
            <person name="Hickey E.K."/>
            <person name="Kolonay J.F."/>
            <person name="Nelson W.C."/>
            <person name="Umayam L.A."/>
            <person name="Ermolaeva M.D."/>
            <person name="Salzberg S.L."/>
            <person name="Delcher A."/>
            <person name="Utterback T.R."/>
            <person name="Weidman J.F."/>
            <person name="Khouri H.M."/>
            <person name="Gill J."/>
            <person name="Mikula A."/>
            <person name="Bishai W."/>
            <person name="Jacobs W.R. Jr."/>
            <person name="Venter J.C."/>
            <person name="Fraser C.M."/>
        </authorList>
    </citation>
    <scope>NUCLEOTIDE SEQUENCE [LARGE SCALE GENOMIC DNA]</scope>
    <source>
        <strain>CDC 1551 / Oshkosh</strain>
    </source>
</reference>
<proteinExistence type="inferred from homology"/>
<accession>P9WMC2</accession>
<accession>L0TE16</accession>
<accession>P67442</accession>
<accession>Q50720</accession>
<gene>
    <name type="ordered locus">MT3513</name>
</gene>
<protein>
    <recommendedName>
        <fullName evidence="3">HTH-type transcriptional regulator MT3513</fullName>
    </recommendedName>
</protein>
<dbReference type="EMBL" id="AE000516">
    <property type="protein sequence ID" value="AAK47851.1"/>
    <property type="molecule type" value="Genomic_DNA"/>
</dbReference>
<dbReference type="PIR" id="B70736">
    <property type="entry name" value="B70736"/>
</dbReference>
<dbReference type="RefSeq" id="WP_003417984.1">
    <property type="nucleotide sequence ID" value="NZ_KK341227.1"/>
</dbReference>
<dbReference type="SMR" id="P9WMC2"/>
<dbReference type="KEGG" id="mtc:MT3513"/>
<dbReference type="PATRIC" id="fig|83331.31.peg.3771"/>
<dbReference type="HOGENOM" id="CLU_088572_2_0_11"/>
<dbReference type="Proteomes" id="UP000001020">
    <property type="component" value="Chromosome"/>
</dbReference>
<dbReference type="GO" id="GO:0003700">
    <property type="term" value="F:DNA-binding transcription factor activity"/>
    <property type="evidence" value="ECO:0007669"/>
    <property type="project" value="TreeGrafter"/>
</dbReference>
<dbReference type="GO" id="GO:0000976">
    <property type="term" value="F:transcription cis-regulatory region binding"/>
    <property type="evidence" value="ECO:0007669"/>
    <property type="project" value="TreeGrafter"/>
</dbReference>
<dbReference type="Gene3D" id="1.10.357.10">
    <property type="entry name" value="Tetracycline Repressor, domain 2"/>
    <property type="match status" value="1"/>
</dbReference>
<dbReference type="InterPro" id="IPR023772">
    <property type="entry name" value="DNA-bd_HTH_TetR-type_CS"/>
</dbReference>
<dbReference type="InterPro" id="IPR009057">
    <property type="entry name" value="Homeodomain-like_sf"/>
</dbReference>
<dbReference type="InterPro" id="IPR050109">
    <property type="entry name" value="HTH-type_TetR-like_transc_reg"/>
</dbReference>
<dbReference type="InterPro" id="IPR001647">
    <property type="entry name" value="HTH_TetR"/>
</dbReference>
<dbReference type="PANTHER" id="PTHR30055">
    <property type="entry name" value="HTH-TYPE TRANSCRIPTIONAL REGULATOR RUTR"/>
    <property type="match status" value="1"/>
</dbReference>
<dbReference type="PANTHER" id="PTHR30055:SF153">
    <property type="entry name" value="HTH-TYPE TRANSCRIPTIONAL REPRESSOR RV3405C"/>
    <property type="match status" value="1"/>
</dbReference>
<dbReference type="Pfam" id="PF00440">
    <property type="entry name" value="TetR_N"/>
    <property type="match status" value="1"/>
</dbReference>
<dbReference type="PRINTS" id="PR00455">
    <property type="entry name" value="HTHTETR"/>
</dbReference>
<dbReference type="SUPFAM" id="SSF46689">
    <property type="entry name" value="Homeodomain-like"/>
    <property type="match status" value="1"/>
</dbReference>
<dbReference type="PROSITE" id="PS01081">
    <property type="entry name" value="HTH_TETR_1"/>
    <property type="match status" value="1"/>
</dbReference>
<dbReference type="PROSITE" id="PS50977">
    <property type="entry name" value="HTH_TETR_2"/>
    <property type="match status" value="1"/>
</dbReference>
<feature type="chain" id="PRO_0000427329" description="HTH-type transcriptional regulator MT3513">
    <location>
        <begin position="1"/>
        <end position="188"/>
    </location>
</feature>
<feature type="domain" description="HTH tetR-type" evidence="2">
    <location>
        <begin position="17"/>
        <end position="77"/>
    </location>
</feature>
<feature type="DNA-binding region" description="H-T-H motif" evidence="2">
    <location>
        <begin position="40"/>
        <end position="59"/>
    </location>
</feature>